<reference key="1">
    <citation type="journal article" date="2001" name="Proc. Natl. Acad. Sci. U.S.A.">
        <title>Complete genome sequence of Caulobacter crescentus.</title>
        <authorList>
            <person name="Nierman W.C."/>
            <person name="Feldblyum T.V."/>
            <person name="Laub M.T."/>
            <person name="Paulsen I.T."/>
            <person name="Nelson K.E."/>
            <person name="Eisen J.A."/>
            <person name="Heidelberg J.F."/>
            <person name="Alley M.R.K."/>
            <person name="Ohta N."/>
            <person name="Maddock J.R."/>
            <person name="Potocka I."/>
            <person name="Nelson W.C."/>
            <person name="Newton A."/>
            <person name="Stephens C."/>
            <person name="Phadke N.D."/>
            <person name="Ely B."/>
            <person name="DeBoy R.T."/>
            <person name="Dodson R.J."/>
            <person name="Durkin A.S."/>
            <person name="Gwinn M.L."/>
            <person name="Haft D.H."/>
            <person name="Kolonay J.F."/>
            <person name="Smit J."/>
            <person name="Craven M.B."/>
            <person name="Khouri H.M."/>
            <person name="Shetty J."/>
            <person name="Berry K.J."/>
            <person name="Utterback T.R."/>
            <person name="Tran K."/>
            <person name="Wolf A.M."/>
            <person name="Vamathevan J.J."/>
            <person name="Ermolaeva M.D."/>
            <person name="White O."/>
            <person name="Salzberg S.L."/>
            <person name="Venter J.C."/>
            <person name="Shapiro L."/>
            <person name="Fraser C.M."/>
        </authorList>
    </citation>
    <scope>NUCLEOTIDE SEQUENCE [LARGE SCALE GENOMIC DNA]</scope>
    <source>
        <strain>ATCC 19089 / CIP 103742 / CB 15</strain>
    </source>
</reference>
<name>HUTI_CAUVC</name>
<protein>
    <recommendedName>
        <fullName evidence="1">Imidazolonepropionase</fullName>
        <ecNumber evidence="1">3.5.2.7</ecNumber>
    </recommendedName>
    <alternativeName>
        <fullName evidence="1">Imidazolone-5-propionate hydrolase</fullName>
    </alternativeName>
</protein>
<feature type="chain" id="PRO_0000160946" description="Imidazolonepropionase">
    <location>
        <begin position="1"/>
        <end position="401"/>
    </location>
</feature>
<feature type="binding site" evidence="1">
    <location>
        <position position="70"/>
    </location>
    <ligand>
        <name>Fe(3+)</name>
        <dbReference type="ChEBI" id="CHEBI:29034"/>
    </ligand>
</feature>
<feature type="binding site" evidence="1">
    <location>
        <position position="70"/>
    </location>
    <ligand>
        <name>Zn(2+)</name>
        <dbReference type="ChEBI" id="CHEBI:29105"/>
    </ligand>
</feature>
<feature type="binding site" evidence="1">
    <location>
        <position position="72"/>
    </location>
    <ligand>
        <name>Fe(3+)</name>
        <dbReference type="ChEBI" id="CHEBI:29034"/>
    </ligand>
</feature>
<feature type="binding site" evidence="1">
    <location>
        <position position="72"/>
    </location>
    <ligand>
        <name>Zn(2+)</name>
        <dbReference type="ChEBI" id="CHEBI:29105"/>
    </ligand>
</feature>
<feature type="binding site" evidence="1">
    <location>
        <position position="79"/>
    </location>
    <ligand>
        <name>4-imidazolone-5-propanoate</name>
        <dbReference type="ChEBI" id="CHEBI:77893"/>
    </ligand>
</feature>
<feature type="binding site" evidence="1">
    <location>
        <position position="142"/>
    </location>
    <ligand>
        <name>4-imidazolone-5-propanoate</name>
        <dbReference type="ChEBI" id="CHEBI:77893"/>
    </ligand>
</feature>
<feature type="binding site" evidence="1">
    <location>
        <position position="142"/>
    </location>
    <ligand>
        <name>N-formimidoyl-L-glutamate</name>
        <dbReference type="ChEBI" id="CHEBI:58928"/>
    </ligand>
</feature>
<feature type="binding site" evidence="1">
    <location>
        <position position="175"/>
    </location>
    <ligand>
        <name>4-imidazolone-5-propanoate</name>
        <dbReference type="ChEBI" id="CHEBI:77893"/>
    </ligand>
</feature>
<feature type="binding site" evidence="1">
    <location>
        <position position="240"/>
    </location>
    <ligand>
        <name>Fe(3+)</name>
        <dbReference type="ChEBI" id="CHEBI:29034"/>
    </ligand>
</feature>
<feature type="binding site" evidence="1">
    <location>
        <position position="240"/>
    </location>
    <ligand>
        <name>Zn(2+)</name>
        <dbReference type="ChEBI" id="CHEBI:29105"/>
    </ligand>
</feature>
<feature type="binding site" evidence="1">
    <location>
        <position position="243"/>
    </location>
    <ligand>
        <name>4-imidazolone-5-propanoate</name>
        <dbReference type="ChEBI" id="CHEBI:77893"/>
    </ligand>
</feature>
<feature type="binding site" evidence="1">
    <location>
        <position position="315"/>
    </location>
    <ligand>
        <name>Fe(3+)</name>
        <dbReference type="ChEBI" id="CHEBI:29034"/>
    </ligand>
</feature>
<feature type="binding site" evidence="1">
    <location>
        <position position="315"/>
    </location>
    <ligand>
        <name>Zn(2+)</name>
        <dbReference type="ChEBI" id="CHEBI:29105"/>
    </ligand>
</feature>
<feature type="binding site" evidence="1">
    <location>
        <position position="317"/>
    </location>
    <ligand>
        <name>N-formimidoyl-L-glutamate</name>
        <dbReference type="ChEBI" id="CHEBI:58928"/>
    </ligand>
</feature>
<feature type="binding site" evidence="1">
    <location>
        <position position="319"/>
    </location>
    <ligand>
        <name>N-formimidoyl-L-glutamate</name>
        <dbReference type="ChEBI" id="CHEBI:58928"/>
    </ligand>
</feature>
<feature type="binding site" evidence="1">
    <location>
        <position position="320"/>
    </location>
    <ligand>
        <name>4-imidazolone-5-propanoate</name>
        <dbReference type="ChEBI" id="CHEBI:77893"/>
    </ligand>
</feature>
<sequence>MRCDRVWINARLATLAPGRQGLGIVEDGVVACLGGRIAYAGPAAAAPTFEAAESIDVDGRWITPGLIDPHTHLVFAGDRAHEFELRLAGASYEEIARAGGGIVSTMRATRAASEAELIAAALPRLDALLAEGVTTVEIKSGYGLSLDDELKSLRAARALADIRRVGVTTTFLGAHALPPEYRDDEDGYVDLVCQTMIPAIAARGLADAVDGFCEGIGFSPAQIRRVFDAAKAHGLPVKLHAEQLSNLSGAALAAEYNALSADHLEHLDAAGIAAMAASGTVATLLPGAYYFTRETLVPPIAALRAAGVPMALATDCNPGTSPLTSPLLVMNMAATLFRMTVEECLAGVTREAARALGLLADRGTLEAGKACDLAIWDVERPAELVYRMGFNPLHARVWRGL</sequence>
<comment type="function">
    <text evidence="1">Catalyzes the hydrolytic cleavage of the carbon-nitrogen bond in imidazolone-5-propanoate to yield N-formimidoyl-L-glutamate. It is the third step in the universal histidine degradation pathway.</text>
</comment>
<comment type="catalytic activity">
    <reaction evidence="1">
        <text>4-imidazolone-5-propanoate + H2O = N-formimidoyl-L-glutamate</text>
        <dbReference type="Rhea" id="RHEA:23660"/>
        <dbReference type="ChEBI" id="CHEBI:15377"/>
        <dbReference type="ChEBI" id="CHEBI:58928"/>
        <dbReference type="ChEBI" id="CHEBI:77893"/>
        <dbReference type="EC" id="3.5.2.7"/>
    </reaction>
</comment>
<comment type="cofactor">
    <cofactor evidence="1">
        <name>Zn(2+)</name>
        <dbReference type="ChEBI" id="CHEBI:29105"/>
    </cofactor>
    <cofactor evidence="1">
        <name>Fe(3+)</name>
        <dbReference type="ChEBI" id="CHEBI:29034"/>
    </cofactor>
    <text evidence="1">Binds 1 zinc or iron ion per subunit.</text>
</comment>
<comment type="pathway">
    <text evidence="1">Amino-acid degradation; L-histidine degradation into L-glutamate; N-formimidoyl-L-glutamate from L-histidine: step 3/3.</text>
</comment>
<comment type="subcellular location">
    <subcellularLocation>
        <location evidence="1">Cytoplasm</location>
    </subcellularLocation>
</comment>
<comment type="similarity">
    <text evidence="1">Belongs to the metallo-dependent hydrolases superfamily. HutI family.</text>
</comment>
<accession>P58079</accession>
<organism>
    <name type="scientific">Caulobacter vibrioides (strain ATCC 19089 / CIP 103742 / CB 15)</name>
    <name type="common">Caulobacter crescentus</name>
    <dbReference type="NCBI Taxonomy" id="190650"/>
    <lineage>
        <taxon>Bacteria</taxon>
        <taxon>Pseudomonadati</taxon>
        <taxon>Pseudomonadota</taxon>
        <taxon>Alphaproteobacteria</taxon>
        <taxon>Caulobacterales</taxon>
        <taxon>Caulobacteraceae</taxon>
        <taxon>Caulobacter</taxon>
    </lineage>
</organism>
<keyword id="KW-0963">Cytoplasm</keyword>
<keyword id="KW-0369">Histidine metabolism</keyword>
<keyword id="KW-0378">Hydrolase</keyword>
<keyword id="KW-0408">Iron</keyword>
<keyword id="KW-0479">Metal-binding</keyword>
<keyword id="KW-1185">Reference proteome</keyword>
<keyword id="KW-0862">Zinc</keyword>
<proteinExistence type="inferred from homology"/>
<gene>
    <name evidence="1" type="primary">hutI</name>
    <name type="ordered locus">CC_0960</name>
</gene>
<dbReference type="EC" id="3.5.2.7" evidence="1"/>
<dbReference type="EMBL" id="AE005673">
    <property type="protein sequence ID" value="AAK22944.1"/>
    <property type="molecule type" value="Genomic_DNA"/>
</dbReference>
<dbReference type="PIR" id="D87368">
    <property type="entry name" value="D87368"/>
</dbReference>
<dbReference type="RefSeq" id="NP_419776.1">
    <property type="nucleotide sequence ID" value="NC_002696.2"/>
</dbReference>
<dbReference type="RefSeq" id="WP_010918844.1">
    <property type="nucleotide sequence ID" value="NC_002696.2"/>
</dbReference>
<dbReference type="SMR" id="P58079"/>
<dbReference type="STRING" id="190650.CC_0960"/>
<dbReference type="EnsemblBacteria" id="AAK22944">
    <property type="protein sequence ID" value="AAK22944"/>
    <property type="gene ID" value="CC_0960"/>
</dbReference>
<dbReference type="KEGG" id="ccr:CC_0960"/>
<dbReference type="PATRIC" id="fig|190650.5.peg.976"/>
<dbReference type="eggNOG" id="COG1228">
    <property type="taxonomic scope" value="Bacteria"/>
</dbReference>
<dbReference type="HOGENOM" id="CLU_041647_0_0_5"/>
<dbReference type="BioCyc" id="CAULO:CC0960-MONOMER"/>
<dbReference type="UniPathway" id="UPA00379">
    <property type="reaction ID" value="UER00551"/>
</dbReference>
<dbReference type="Proteomes" id="UP000001816">
    <property type="component" value="Chromosome"/>
</dbReference>
<dbReference type="GO" id="GO:0005737">
    <property type="term" value="C:cytoplasm"/>
    <property type="evidence" value="ECO:0007669"/>
    <property type="project" value="UniProtKB-SubCell"/>
</dbReference>
<dbReference type="GO" id="GO:0050480">
    <property type="term" value="F:imidazolonepropionase activity"/>
    <property type="evidence" value="ECO:0007669"/>
    <property type="project" value="UniProtKB-UniRule"/>
</dbReference>
<dbReference type="GO" id="GO:0005506">
    <property type="term" value="F:iron ion binding"/>
    <property type="evidence" value="ECO:0007669"/>
    <property type="project" value="UniProtKB-UniRule"/>
</dbReference>
<dbReference type="GO" id="GO:0008270">
    <property type="term" value="F:zinc ion binding"/>
    <property type="evidence" value="ECO:0007669"/>
    <property type="project" value="UniProtKB-UniRule"/>
</dbReference>
<dbReference type="GO" id="GO:0019556">
    <property type="term" value="P:L-histidine catabolic process to glutamate and formamide"/>
    <property type="evidence" value="ECO:0007669"/>
    <property type="project" value="UniProtKB-UniPathway"/>
</dbReference>
<dbReference type="GO" id="GO:0019557">
    <property type="term" value="P:L-histidine catabolic process to glutamate and formate"/>
    <property type="evidence" value="ECO:0007669"/>
    <property type="project" value="UniProtKB-UniPathway"/>
</dbReference>
<dbReference type="CDD" id="cd01296">
    <property type="entry name" value="Imidazolone-5PH"/>
    <property type="match status" value="1"/>
</dbReference>
<dbReference type="FunFam" id="3.20.20.140:FF:000007">
    <property type="entry name" value="Imidazolonepropionase"/>
    <property type="match status" value="1"/>
</dbReference>
<dbReference type="Gene3D" id="3.20.20.140">
    <property type="entry name" value="Metal-dependent hydrolases"/>
    <property type="match status" value="1"/>
</dbReference>
<dbReference type="Gene3D" id="2.30.40.10">
    <property type="entry name" value="Urease, subunit C, domain 1"/>
    <property type="match status" value="1"/>
</dbReference>
<dbReference type="HAMAP" id="MF_00372">
    <property type="entry name" value="HutI"/>
    <property type="match status" value="1"/>
</dbReference>
<dbReference type="InterPro" id="IPR006680">
    <property type="entry name" value="Amidohydro-rel"/>
</dbReference>
<dbReference type="InterPro" id="IPR005920">
    <property type="entry name" value="HutI"/>
</dbReference>
<dbReference type="InterPro" id="IPR011059">
    <property type="entry name" value="Metal-dep_hydrolase_composite"/>
</dbReference>
<dbReference type="InterPro" id="IPR032466">
    <property type="entry name" value="Metal_Hydrolase"/>
</dbReference>
<dbReference type="NCBIfam" id="TIGR01224">
    <property type="entry name" value="hutI"/>
    <property type="match status" value="1"/>
</dbReference>
<dbReference type="PANTHER" id="PTHR42752">
    <property type="entry name" value="IMIDAZOLONEPROPIONASE"/>
    <property type="match status" value="1"/>
</dbReference>
<dbReference type="PANTHER" id="PTHR42752:SF1">
    <property type="entry name" value="IMIDAZOLONEPROPIONASE-RELATED"/>
    <property type="match status" value="1"/>
</dbReference>
<dbReference type="Pfam" id="PF01979">
    <property type="entry name" value="Amidohydro_1"/>
    <property type="match status" value="1"/>
</dbReference>
<dbReference type="SUPFAM" id="SSF51338">
    <property type="entry name" value="Composite domain of metallo-dependent hydrolases"/>
    <property type="match status" value="1"/>
</dbReference>
<dbReference type="SUPFAM" id="SSF51556">
    <property type="entry name" value="Metallo-dependent hydrolases"/>
    <property type="match status" value="1"/>
</dbReference>
<evidence type="ECO:0000255" key="1">
    <source>
        <dbReference type="HAMAP-Rule" id="MF_00372"/>
    </source>
</evidence>